<feature type="chain" id="PRO_0000433239" description="NAC domain-containing protein 41">
    <location>
        <begin position="1"/>
        <end position="268"/>
    </location>
</feature>
<feature type="domain" description="NAC" evidence="1">
    <location>
        <begin position="15"/>
        <end position="160"/>
    </location>
</feature>
<feature type="DNA-binding region" evidence="1">
    <location>
        <begin position="109"/>
        <end position="166"/>
    </location>
</feature>
<feature type="region of interest" description="Disordered" evidence="2">
    <location>
        <begin position="166"/>
        <end position="190"/>
    </location>
</feature>
<feature type="compositionally biased region" description="Basic and acidic residues" evidence="2">
    <location>
        <begin position="180"/>
        <end position="190"/>
    </location>
</feature>
<sequence length="268" mass="31124">MEKRSSIKNRGVLRLPPGFRFHPTDEELVVQYLRRKVTGLPLPASVIPETDVCKSDPWDLPGDCESEMYFFSTREAKYPNGNRSNRSTGSGYWKATGLDKQIGKKKLVVGMKKTLVFYKGKPPNGTRTNWVLHEYRLVDSQQDSLYGQNMNWVLCRVFLKKRSNSNSKRKEDEKEEVENEKETETEREREEENKKSTCPIFYDFMRKDTKKKRRRRRCCDLNLTPATCCCCSSSTSSSSVCSSALTHTSSNDNRQEISYRENKFCLFL</sequence>
<name>NAC41_ARATH</name>
<comment type="function">
    <text evidence="3">Transcription activator of the mannan synthase CSLA9. Recognizes and binds to DNA-specific sequence of CSLA9 promoter.</text>
</comment>
<comment type="subcellular location">
    <subcellularLocation>
        <location evidence="1">Nucleus</location>
    </subcellularLocation>
</comment>
<comment type="alternative products">
    <event type="alternative splicing"/>
    <isoform>
        <id>O22798-1</id>
        <name>1</name>
        <sequence type="displayed"/>
    </isoform>
    <text evidence="5">A number of isoforms are produced. According to EST sequences.</text>
</comment>
<comment type="domain">
    <text evidence="1">The NAC domain includes a DNA binding domain and a dimerization domain.</text>
</comment>
<comment type="disruption phenotype">
    <text evidence="3">No visible phenotype under normal growth conditions.</text>
</comment>
<organism>
    <name type="scientific">Arabidopsis thaliana</name>
    <name type="common">Mouse-ear cress</name>
    <dbReference type="NCBI Taxonomy" id="3702"/>
    <lineage>
        <taxon>Eukaryota</taxon>
        <taxon>Viridiplantae</taxon>
        <taxon>Streptophyta</taxon>
        <taxon>Embryophyta</taxon>
        <taxon>Tracheophyta</taxon>
        <taxon>Spermatophyta</taxon>
        <taxon>Magnoliopsida</taxon>
        <taxon>eudicotyledons</taxon>
        <taxon>Gunneridae</taxon>
        <taxon>Pentapetalae</taxon>
        <taxon>rosids</taxon>
        <taxon>malvids</taxon>
        <taxon>Brassicales</taxon>
        <taxon>Brassicaceae</taxon>
        <taxon>Camelineae</taxon>
        <taxon>Arabidopsis</taxon>
    </lineage>
</organism>
<proteinExistence type="evidence at transcript level"/>
<dbReference type="EMBL" id="AC002332">
    <property type="protein sequence ID" value="AAB80665.1"/>
    <property type="molecule type" value="Genomic_DNA"/>
</dbReference>
<dbReference type="EMBL" id="CP002685">
    <property type="protein sequence ID" value="AEC08840.1"/>
    <property type="molecule type" value="Genomic_DNA"/>
</dbReference>
<dbReference type="EMBL" id="AF325080">
    <property type="protein sequence ID" value="AAK17148.1"/>
    <property type="molecule type" value="mRNA"/>
</dbReference>
<dbReference type="EMBL" id="AF410299">
    <property type="protein sequence ID" value="AAK95285.1"/>
    <property type="molecule type" value="mRNA"/>
</dbReference>
<dbReference type="EMBL" id="AY093730">
    <property type="protein sequence ID" value="AAM10354.1"/>
    <property type="molecule type" value="mRNA"/>
</dbReference>
<dbReference type="PIR" id="A84746">
    <property type="entry name" value="A84746"/>
</dbReference>
<dbReference type="RefSeq" id="NP_180906.1">
    <molecule id="O22798-1"/>
    <property type="nucleotide sequence ID" value="NM_128908.5"/>
</dbReference>
<dbReference type="SMR" id="O22798"/>
<dbReference type="FunCoup" id="O22798">
    <property type="interactions" value="3"/>
</dbReference>
<dbReference type="IntAct" id="O22798">
    <property type="interactions" value="11"/>
</dbReference>
<dbReference type="STRING" id="3702.O22798"/>
<dbReference type="PaxDb" id="3702-AT2G33480.1"/>
<dbReference type="ProteomicsDB" id="251193">
    <molecule id="O22798-1"/>
</dbReference>
<dbReference type="EnsemblPlants" id="AT2G33480.1">
    <molecule id="O22798-1"/>
    <property type="protein sequence ID" value="AT2G33480.1"/>
    <property type="gene ID" value="AT2G33480"/>
</dbReference>
<dbReference type="GeneID" id="817913"/>
<dbReference type="Gramene" id="AT2G33480.1">
    <molecule id="O22798-1"/>
    <property type="protein sequence ID" value="AT2G33480.1"/>
    <property type="gene ID" value="AT2G33480"/>
</dbReference>
<dbReference type="KEGG" id="ath:AT2G33480"/>
<dbReference type="Araport" id="AT2G33480"/>
<dbReference type="TAIR" id="AT2G33480">
    <property type="gene designation" value="NAC041"/>
</dbReference>
<dbReference type="eggNOG" id="ENOG502R7WC">
    <property type="taxonomic scope" value="Eukaryota"/>
</dbReference>
<dbReference type="InParanoid" id="O22798"/>
<dbReference type="OMA" id="HEVISCR"/>
<dbReference type="OrthoDB" id="1871428at2759"/>
<dbReference type="PhylomeDB" id="O22798"/>
<dbReference type="PRO" id="PR:O22798"/>
<dbReference type="Proteomes" id="UP000006548">
    <property type="component" value="Chromosome 2"/>
</dbReference>
<dbReference type="ExpressionAtlas" id="O22798">
    <property type="expression patterns" value="baseline and differential"/>
</dbReference>
<dbReference type="GO" id="GO:0005634">
    <property type="term" value="C:nucleus"/>
    <property type="evidence" value="ECO:0007669"/>
    <property type="project" value="UniProtKB-SubCell"/>
</dbReference>
<dbReference type="GO" id="GO:0003700">
    <property type="term" value="F:DNA-binding transcription factor activity"/>
    <property type="evidence" value="ECO:0000314"/>
    <property type="project" value="UniProtKB"/>
</dbReference>
<dbReference type="GO" id="GO:0000976">
    <property type="term" value="F:transcription cis-regulatory region binding"/>
    <property type="evidence" value="ECO:0000353"/>
    <property type="project" value="TAIR"/>
</dbReference>
<dbReference type="FunFam" id="2.170.150.80:FF:000011">
    <property type="entry name" value="NAC domain-containing protein 41"/>
    <property type="match status" value="1"/>
</dbReference>
<dbReference type="Gene3D" id="2.170.150.80">
    <property type="entry name" value="NAC domain"/>
    <property type="match status" value="1"/>
</dbReference>
<dbReference type="InterPro" id="IPR003441">
    <property type="entry name" value="NAC-dom"/>
</dbReference>
<dbReference type="InterPro" id="IPR036093">
    <property type="entry name" value="NAC_dom_sf"/>
</dbReference>
<dbReference type="PANTHER" id="PTHR31744:SF93">
    <property type="entry name" value="NAC DOMAIN-CONTAINING PROTEIN"/>
    <property type="match status" value="1"/>
</dbReference>
<dbReference type="PANTHER" id="PTHR31744">
    <property type="entry name" value="PROTEIN CUP-SHAPED COTYLEDON 2-RELATED"/>
    <property type="match status" value="1"/>
</dbReference>
<dbReference type="Pfam" id="PF02365">
    <property type="entry name" value="NAM"/>
    <property type="match status" value="1"/>
</dbReference>
<dbReference type="SUPFAM" id="SSF101941">
    <property type="entry name" value="NAC domain"/>
    <property type="match status" value="1"/>
</dbReference>
<dbReference type="PROSITE" id="PS51005">
    <property type="entry name" value="NAC"/>
    <property type="match status" value="1"/>
</dbReference>
<evidence type="ECO:0000255" key="1">
    <source>
        <dbReference type="PROSITE-ProRule" id="PRU00353"/>
    </source>
</evidence>
<evidence type="ECO:0000256" key="2">
    <source>
        <dbReference type="SAM" id="MobiDB-lite"/>
    </source>
</evidence>
<evidence type="ECO:0000269" key="3">
    <source>
    </source>
</evidence>
<evidence type="ECO:0000303" key="4">
    <source>
    </source>
</evidence>
<evidence type="ECO:0000305" key="5"/>
<evidence type="ECO:0000312" key="6">
    <source>
        <dbReference type="Araport" id="AT2G33480"/>
    </source>
</evidence>
<accession>O22798</accession>
<gene>
    <name evidence="4" type="primary">NAC041</name>
    <name evidence="6" type="ordered locus">At2g33480</name>
</gene>
<keyword id="KW-0010">Activator</keyword>
<keyword id="KW-0025">Alternative splicing</keyword>
<keyword id="KW-0238">DNA-binding</keyword>
<keyword id="KW-0539">Nucleus</keyword>
<keyword id="KW-1185">Reference proteome</keyword>
<keyword id="KW-0804">Transcription</keyword>
<keyword id="KW-0805">Transcription regulation</keyword>
<reference key="1">
    <citation type="journal article" date="1999" name="Nature">
        <title>Sequence and analysis of chromosome 2 of the plant Arabidopsis thaliana.</title>
        <authorList>
            <person name="Lin X."/>
            <person name="Kaul S."/>
            <person name="Rounsley S.D."/>
            <person name="Shea T.P."/>
            <person name="Benito M.-I."/>
            <person name="Town C.D."/>
            <person name="Fujii C.Y."/>
            <person name="Mason T.M."/>
            <person name="Bowman C.L."/>
            <person name="Barnstead M.E."/>
            <person name="Feldblyum T.V."/>
            <person name="Buell C.R."/>
            <person name="Ketchum K.A."/>
            <person name="Lee J.J."/>
            <person name="Ronning C.M."/>
            <person name="Koo H.L."/>
            <person name="Moffat K.S."/>
            <person name="Cronin L.A."/>
            <person name="Shen M."/>
            <person name="Pai G."/>
            <person name="Van Aken S."/>
            <person name="Umayam L."/>
            <person name="Tallon L.J."/>
            <person name="Gill J.E."/>
            <person name="Adams M.D."/>
            <person name="Carrera A.J."/>
            <person name="Creasy T.H."/>
            <person name="Goodman H.M."/>
            <person name="Somerville C.R."/>
            <person name="Copenhaver G.P."/>
            <person name="Preuss D."/>
            <person name="Nierman W.C."/>
            <person name="White O."/>
            <person name="Eisen J.A."/>
            <person name="Salzberg S.L."/>
            <person name="Fraser C.M."/>
            <person name="Venter J.C."/>
        </authorList>
    </citation>
    <scope>NUCLEOTIDE SEQUENCE [LARGE SCALE GENOMIC DNA]</scope>
    <source>
        <strain>cv. Columbia</strain>
    </source>
</reference>
<reference key="2">
    <citation type="journal article" date="2017" name="Plant J.">
        <title>Araport11: a complete reannotation of the Arabidopsis thaliana reference genome.</title>
        <authorList>
            <person name="Cheng C.Y."/>
            <person name="Krishnakumar V."/>
            <person name="Chan A.P."/>
            <person name="Thibaud-Nissen F."/>
            <person name="Schobel S."/>
            <person name="Town C.D."/>
        </authorList>
    </citation>
    <scope>GENOME REANNOTATION</scope>
    <source>
        <strain>cv. Columbia</strain>
    </source>
</reference>
<reference key="3">
    <citation type="journal article" date="2003" name="Science">
        <title>Empirical analysis of transcriptional activity in the Arabidopsis genome.</title>
        <authorList>
            <person name="Yamada K."/>
            <person name="Lim J."/>
            <person name="Dale J.M."/>
            <person name="Chen H."/>
            <person name="Shinn P."/>
            <person name="Palm C.J."/>
            <person name="Southwick A.M."/>
            <person name="Wu H.C."/>
            <person name="Kim C.J."/>
            <person name="Nguyen M."/>
            <person name="Pham P.K."/>
            <person name="Cheuk R.F."/>
            <person name="Karlin-Newmann G."/>
            <person name="Liu S.X."/>
            <person name="Lam B."/>
            <person name="Sakano H."/>
            <person name="Wu T."/>
            <person name="Yu G."/>
            <person name="Miranda M."/>
            <person name="Quach H.L."/>
            <person name="Tripp M."/>
            <person name="Chang C.H."/>
            <person name="Lee J.M."/>
            <person name="Toriumi M.J."/>
            <person name="Chan M.M."/>
            <person name="Tang C.C."/>
            <person name="Onodera C.S."/>
            <person name="Deng J.M."/>
            <person name="Akiyama K."/>
            <person name="Ansari Y."/>
            <person name="Arakawa T."/>
            <person name="Banh J."/>
            <person name="Banno F."/>
            <person name="Bowser L."/>
            <person name="Brooks S.Y."/>
            <person name="Carninci P."/>
            <person name="Chao Q."/>
            <person name="Choy N."/>
            <person name="Enju A."/>
            <person name="Goldsmith A.D."/>
            <person name="Gurjal M."/>
            <person name="Hansen N.F."/>
            <person name="Hayashizaki Y."/>
            <person name="Johnson-Hopson C."/>
            <person name="Hsuan V.W."/>
            <person name="Iida K."/>
            <person name="Karnes M."/>
            <person name="Khan S."/>
            <person name="Koesema E."/>
            <person name="Ishida J."/>
            <person name="Jiang P.X."/>
            <person name="Jones T."/>
            <person name="Kawai J."/>
            <person name="Kamiya A."/>
            <person name="Meyers C."/>
            <person name="Nakajima M."/>
            <person name="Narusaka M."/>
            <person name="Seki M."/>
            <person name="Sakurai T."/>
            <person name="Satou M."/>
            <person name="Tamse R."/>
            <person name="Vaysberg M."/>
            <person name="Wallender E.K."/>
            <person name="Wong C."/>
            <person name="Yamamura Y."/>
            <person name="Yuan S."/>
            <person name="Shinozaki K."/>
            <person name="Davis R.W."/>
            <person name="Theologis A."/>
            <person name="Ecker J.R."/>
        </authorList>
    </citation>
    <scope>NUCLEOTIDE SEQUENCE [LARGE SCALE MRNA]</scope>
    <source>
        <strain>cv. Columbia</strain>
    </source>
</reference>
<reference key="4">
    <citation type="journal article" date="2003" name="DNA Res.">
        <title>Comprehensive analysis of NAC family genes in Oryza sativa and Arabidopsis thaliana.</title>
        <authorList>
            <person name="Ooka H."/>
            <person name="Satoh K."/>
            <person name="Doi K."/>
            <person name="Nagata T."/>
            <person name="Otomo Y."/>
            <person name="Murakami K."/>
            <person name="Matsubara K."/>
            <person name="Osato N."/>
            <person name="Kawai J."/>
            <person name="Carninci P."/>
            <person name="Hayashizaki Y."/>
            <person name="Suzuki K."/>
            <person name="Kojima K."/>
            <person name="Takahara Y."/>
            <person name="Yamamoto K."/>
            <person name="Kikuchi S."/>
        </authorList>
    </citation>
    <scope>GENE FAMILY</scope>
    <scope>NOMENCLATURE</scope>
</reference>
<reference key="5">
    <citation type="journal article" date="2014" name="Plant Mol. Biol.">
        <title>Transcription factors that directly regulate the expression of CSLA9 encoding mannan synthase in Arabidopsis thaliana.</title>
        <authorList>
            <person name="Kim W.C."/>
            <person name="Reca I.B."/>
            <person name="Kim Y."/>
            <person name="Park S."/>
            <person name="Thomashow M.F."/>
            <person name="Keegstra K."/>
            <person name="Han K.H."/>
        </authorList>
    </citation>
    <scope>FUNCTION</scope>
    <scope>DISRUPTION PHENOTYPE</scope>
</reference>
<protein>
    <recommendedName>
        <fullName evidence="4">NAC domain-containing protein 41</fullName>
        <shortName evidence="4">ANAC041</shortName>
    </recommendedName>
</protein>